<proteinExistence type="inferred from homology"/>
<protein>
    <recommendedName>
        <fullName evidence="1">Translation initiation factor IF-3</fullName>
    </recommendedName>
</protein>
<gene>
    <name evidence="1" type="primary">infC</name>
    <name type="ordered locus">LMOf2365_1810</name>
</gene>
<dbReference type="EMBL" id="AE017262">
    <property type="protein sequence ID" value="AAT04581.1"/>
    <property type="molecule type" value="Genomic_DNA"/>
</dbReference>
<dbReference type="RefSeq" id="WP_010958948.1">
    <property type="nucleotide sequence ID" value="NC_002973.6"/>
</dbReference>
<dbReference type="SMR" id="Q71YN3"/>
<dbReference type="GeneID" id="93239694"/>
<dbReference type="KEGG" id="lmf:LMOf2365_1810"/>
<dbReference type="HOGENOM" id="CLU_054919_3_2_9"/>
<dbReference type="GO" id="GO:0005829">
    <property type="term" value="C:cytosol"/>
    <property type="evidence" value="ECO:0007669"/>
    <property type="project" value="TreeGrafter"/>
</dbReference>
<dbReference type="GO" id="GO:0016020">
    <property type="term" value="C:membrane"/>
    <property type="evidence" value="ECO:0007669"/>
    <property type="project" value="TreeGrafter"/>
</dbReference>
<dbReference type="GO" id="GO:0043022">
    <property type="term" value="F:ribosome binding"/>
    <property type="evidence" value="ECO:0007669"/>
    <property type="project" value="TreeGrafter"/>
</dbReference>
<dbReference type="GO" id="GO:0003743">
    <property type="term" value="F:translation initiation factor activity"/>
    <property type="evidence" value="ECO:0007669"/>
    <property type="project" value="UniProtKB-UniRule"/>
</dbReference>
<dbReference type="GO" id="GO:0032790">
    <property type="term" value="P:ribosome disassembly"/>
    <property type="evidence" value="ECO:0007669"/>
    <property type="project" value="TreeGrafter"/>
</dbReference>
<dbReference type="FunFam" id="3.10.20.80:FF:000001">
    <property type="entry name" value="Translation initiation factor IF-3"/>
    <property type="match status" value="1"/>
</dbReference>
<dbReference type="FunFam" id="3.30.110.10:FF:000001">
    <property type="entry name" value="Translation initiation factor IF-3"/>
    <property type="match status" value="1"/>
</dbReference>
<dbReference type="Gene3D" id="3.30.110.10">
    <property type="entry name" value="Translation initiation factor 3 (IF-3), C-terminal domain"/>
    <property type="match status" value="1"/>
</dbReference>
<dbReference type="Gene3D" id="3.10.20.80">
    <property type="entry name" value="Translation initiation factor 3 (IF-3), N-terminal domain"/>
    <property type="match status" value="1"/>
</dbReference>
<dbReference type="HAMAP" id="MF_00080">
    <property type="entry name" value="IF_3"/>
    <property type="match status" value="1"/>
</dbReference>
<dbReference type="InterPro" id="IPR036788">
    <property type="entry name" value="T_IF-3_C_sf"/>
</dbReference>
<dbReference type="InterPro" id="IPR036787">
    <property type="entry name" value="T_IF-3_N_sf"/>
</dbReference>
<dbReference type="InterPro" id="IPR019813">
    <property type="entry name" value="Translation_initiation_fac3_CS"/>
</dbReference>
<dbReference type="InterPro" id="IPR001288">
    <property type="entry name" value="Translation_initiation_fac_3"/>
</dbReference>
<dbReference type="InterPro" id="IPR019815">
    <property type="entry name" value="Translation_initiation_fac_3_C"/>
</dbReference>
<dbReference type="InterPro" id="IPR019814">
    <property type="entry name" value="Translation_initiation_fac_3_N"/>
</dbReference>
<dbReference type="NCBIfam" id="TIGR00168">
    <property type="entry name" value="infC"/>
    <property type="match status" value="1"/>
</dbReference>
<dbReference type="PANTHER" id="PTHR10938">
    <property type="entry name" value="TRANSLATION INITIATION FACTOR IF-3"/>
    <property type="match status" value="1"/>
</dbReference>
<dbReference type="PANTHER" id="PTHR10938:SF0">
    <property type="entry name" value="TRANSLATION INITIATION FACTOR IF-3, MITOCHONDRIAL"/>
    <property type="match status" value="1"/>
</dbReference>
<dbReference type="Pfam" id="PF00707">
    <property type="entry name" value="IF3_C"/>
    <property type="match status" value="1"/>
</dbReference>
<dbReference type="Pfam" id="PF05198">
    <property type="entry name" value="IF3_N"/>
    <property type="match status" value="1"/>
</dbReference>
<dbReference type="SUPFAM" id="SSF55200">
    <property type="entry name" value="Translation initiation factor IF3, C-terminal domain"/>
    <property type="match status" value="1"/>
</dbReference>
<dbReference type="SUPFAM" id="SSF54364">
    <property type="entry name" value="Translation initiation factor IF3, N-terminal domain"/>
    <property type="match status" value="1"/>
</dbReference>
<dbReference type="PROSITE" id="PS00938">
    <property type="entry name" value="IF3"/>
    <property type="match status" value="1"/>
</dbReference>
<feature type="chain" id="PRO_0000177537" description="Translation initiation factor IF-3">
    <location>
        <begin position="1"/>
        <end position="171"/>
    </location>
</feature>
<organism>
    <name type="scientific">Listeria monocytogenes serotype 4b (strain F2365)</name>
    <dbReference type="NCBI Taxonomy" id="265669"/>
    <lineage>
        <taxon>Bacteria</taxon>
        <taxon>Bacillati</taxon>
        <taxon>Bacillota</taxon>
        <taxon>Bacilli</taxon>
        <taxon>Bacillales</taxon>
        <taxon>Listeriaceae</taxon>
        <taxon>Listeria</taxon>
    </lineage>
</organism>
<accession>Q71YN3</accession>
<keyword id="KW-0963">Cytoplasm</keyword>
<keyword id="KW-0396">Initiation factor</keyword>
<keyword id="KW-0648">Protein biosynthesis</keyword>
<sequence>MSKDMLVNDGIRAREVRLIDQDGEQLGVKSKIDALQIAEKANLDLVLVAPTAKPPVARIMDYGKFRFEQQKKDKEARKNQKVIVMKEVRLSPTIDEHDFDTKLRNARKFLEKGDKVKCSIRFKGRAITHKEIGQKVLDRFAKACEDLCTIEQRPKMDGRSMFLVLAPLHEK</sequence>
<evidence type="ECO:0000255" key="1">
    <source>
        <dbReference type="HAMAP-Rule" id="MF_00080"/>
    </source>
</evidence>
<reference key="1">
    <citation type="journal article" date="2004" name="Nucleic Acids Res.">
        <title>Whole genome comparisons of serotype 4b and 1/2a strains of the food-borne pathogen Listeria monocytogenes reveal new insights into the core genome components of this species.</title>
        <authorList>
            <person name="Nelson K.E."/>
            <person name="Fouts D.E."/>
            <person name="Mongodin E.F."/>
            <person name="Ravel J."/>
            <person name="DeBoy R.T."/>
            <person name="Kolonay J.F."/>
            <person name="Rasko D.A."/>
            <person name="Angiuoli S.V."/>
            <person name="Gill S.R."/>
            <person name="Paulsen I.T."/>
            <person name="Peterson J.D."/>
            <person name="White O."/>
            <person name="Nelson W.C."/>
            <person name="Nierman W.C."/>
            <person name="Beanan M.J."/>
            <person name="Brinkac L.M."/>
            <person name="Daugherty S.C."/>
            <person name="Dodson R.J."/>
            <person name="Durkin A.S."/>
            <person name="Madupu R."/>
            <person name="Haft D.H."/>
            <person name="Selengut J."/>
            <person name="Van Aken S.E."/>
            <person name="Khouri H.M."/>
            <person name="Fedorova N."/>
            <person name="Forberger H.A."/>
            <person name="Tran B."/>
            <person name="Kathariou S."/>
            <person name="Wonderling L.D."/>
            <person name="Uhlich G.A."/>
            <person name="Bayles D.O."/>
            <person name="Luchansky J.B."/>
            <person name="Fraser C.M."/>
        </authorList>
    </citation>
    <scope>NUCLEOTIDE SEQUENCE [LARGE SCALE GENOMIC DNA]</scope>
    <source>
        <strain>F2365</strain>
    </source>
</reference>
<name>IF3_LISMF</name>
<comment type="function">
    <text evidence="1">IF-3 binds to the 30S ribosomal subunit and shifts the equilibrium between 70S ribosomes and their 50S and 30S subunits in favor of the free subunits, thus enhancing the availability of 30S subunits on which protein synthesis initiation begins.</text>
</comment>
<comment type="subunit">
    <text evidence="1">Monomer.</text>
</comment>
<comment type="subcellular location">
    <subcellularLocation>
        <location evidence="1">Cytoplasm</location>
    </subcellularLocation>
</comment>
<comment type="similarity">
    <text evidence="1">Belongs to the IF-3 family.</text>
</comment>